<gene>
    <name evidence="1" type="primary">gpmA</name>
    <name type="ordered locus">HAPS_0971</name>
</gene>
<accession>B8F5J4</accession>
<organism>
    <name type="scientific">Glaesserella parasuis serovar 5 (strain SH0165)</name>
    <name type="common">Haemophilus parasuis</name>
    <dbReference type="NCBI Taxonomy" id="557723"/>
    <lineage>
        <taxon>Bacteria</taxon>
        <taxon>Pseudomonadati</taxon>
        <taxon>Pseudomonadota</taxon>
        <taxon>Gammaproteobacteria</taxon>
        <taxon>Pasteurellales</taxon>
        <taxon>Pasteurellaceae</taxon>
        <taxon>Glaesserella</taxon>
    </lineage>
</organism>
<sequence length="227" mass="26046">MELVFIRHGFSEWNAKNLFTGWRDVNLTERGIEEAKAAGKKLLDAGYEFDIAFTSVLTRAIKTCNIVLEESNQLWIPQVKNWRLNERHYGALQGLDKKATAEQYGDEQVHIWRRSYDISPPDLDPQDPNSAHNDRRYAHLPKDVVPNAENLKITLERVLPFWEDQIAPALLSGKRVLVTAHGNSLRALAKHIIGISDEEIMDFEIPTGQPLVLKLDDKLNFVEKFYL</sequence>
<protein>
    <recommendedName>
        <fullName evidence="1">2,3-bisphosphoglycerate-dependent phosphoglycerate mutase</fullName>
        <shortName evidence="1">BPG-dependent PGAM</shortName>
        <shortName evidence="1">PGAM</shortName>
        <shortName evidence="1">Phosphoglyceromutase</shortName>
        <shortName evidence="1">dPGM</shortName>
        <ecNumber evidence="1">5.4.2.11</ecNumber>
    </recommendedName>
</protein>
<keyword id="KW-0312">Gluconeogenesis</keyword>
<keyword id="KW-0324">Glycolysis</keyword>
<keyword id="KW-0413">Isomerase</keyword>
<keyword id="KW-1185">Reference proteome</keyword>
<feature type="chain" id="PRO_1000149514" description="2,3-bisphosphoglycerate-dependent phosphoglycerate mutase">
    <location>
        <begin position="1"/>
        <end position="227"/>
    </location>
</feature>
<feature type="active site" description="Tele-phosphohistidine intermediate" evidence="1">
    <location>
        <position position="8"/>
    </location>
</feature>
<feature type="active site" description="Proton donor/acceptor" evidence="1">
    <location>
        <position position="86"/>
    </location>
</feature>
<feature type="binding site" evidence="1">
    <location>
        <begin position="7"/>
        <end position="14"/>
    </location>
    <ligand>
        <name>substrate</name>
    </ligand>
</feature>
<feature type="binding site" evidence="1">
    <location>
        <begin position="20"/>
        <end position="21"/>
    </location>
    <ligand>
        <name>substrate</name>
    </ligand>
</feature>
<feature type="binding site" evidence="1">
    <location>
        <position position="59"/>
    </location>
    <ligand>
        <name>substrate</name>
    </ligand>
</feature>
<feature type="binding site" evidence="1">
    <location>
        <begin position="86"/>
        <end position="89"/>
    </location>
    <ligand>
        <name>substrate</name>
    </ligand>
</feature>
<feature type="binding site" evidence="1">
    <location>
        <position position="97"/>
    </location>
    <ligand>
        <name>substrate</name>
    </ligand>
</feature>
<feature type="binding site" evidence="1">
    <location>
        <begin position="113"/>
        <end position="114"/>
    </location>
    <ligand>
        <name>substrate</name>
    </ligand>
</feature>
<feature type="binding site" evidence="1">
    <location>
        <begin position="182"/>
        <end position="183"/>
    </location>
    <ligand>
        <name>substrate</name>
    </ligand>
</feature>
<feature type="site" description="Transition state stabilizer" evidence="1">
    <location>
        <position position="181"/>
    </location>
</feature>
<proteinExistence type="inferred from homology"/>
<dbReference type="EC" id="5.4.2.11" evidence="1"/>
<dbReference type="EMBL" id="CP001321">
    <property type="protein sequence ID" value="ACL32596.1"/>
    <property type="molecule type" value="Genomic_DNA"/>
</dbReference>
<dbReference type="RefSeq" id="WP_005713360.1">
    <property type="nucleotide sequence ID" value="NC_011852.1"/>
</dbReference>
<dbReference type="SMR" id="B8F5J4"/>
<dbReference type="STRING" id="557723.HAPS_0971"/>
<dbReference type="KEGG" id="hap:HAPS_0971"/>
<dbReference type="HOGENOM" id="CLU_033323_1_5_6"/>
<dbReference type="UniPathway" id="UPA00109">
    <property type="reaction ID" value="UER00186"/>
</dbReference>
<dbReference type="Proteomes" id="UP000006743">
    <property type="component" value="Chromosome"/>
</dbReference>
<dbReference type="GO" id="GO:0004619">
    <property type="term" value="F:phosphoglycerate mutase activity"/>
    <property type="evidence" value="ECO:0007669"/>
    <property type="project" value="UniProtKB-EC"/>
</dbReference>
<dbReference type="GO" id="GO:0006094">
    <property type="term" value="P:gluconeogenesis"/>
    <property type="evidence" value="ECO:0007669"/>
    <property type="project" value="UniProtKB-UniRule"/>
</dbReference>
<dbReference type="GO" id="GO:0006096">
    <property type="term" value="P:glycolytic process"/>
    <property type="evidence" value="ECO:0007669"/>
    <property type="project" value="UniProtKB-UniRule"/>
</dbReference>
<dbReference type="CDD" id="cd07067">
    <property type="entry name" value="HP_PGM_like"/>
    <property type="match status" value="1"/>
</dbReference>
<dbReference type="FunFam" id="3.40.50.1240:FF:000003">
    <property type="entry name" value="2,3-bisphosphoglycerate-dependent phosphoglycerate mutase"/>
    <property type="match status" value="1"/>
</dbReference>
<dbReference type="Gene3D" id="3.40.50.1240">
    <property type="entry name" value="Phosphoglycerate mutase-like"/>
    <property type="match status" value="1"/>
</dbReference>
<dbReference type="HAMAP" id="MF_01039">
    <property type="entry name" value="PGAM_GpmA"/>
    <property type="match status" value="1"/>
</dbReference>
<dbReference type="InterPro" id="IPR013078">
    <property type="entry name" value="His_Pase_superF_clade-1"/>
</dbReference>
<dbReference type="InterPro" id="IPR029033">
    <property type="entry name" value="His_PPase_superfam"/>
</dbReference>
<dbReference type="InterPro" id="IPR005952">
    <property type="entry name" value="Phosphogly_mut1"/>
</dbReference>
<dbReference type="NCBIfam" id="TIGR01258">
    <property type="entry name" value="pgm_1"/>
    <property type="match status" value="1"/>
</dbReference>
<dbReference type="NCBIfam" id="NF010713">
    <property type="entry name" value="PRK14115.1"/>
    <property type="match status" value="1"/>
</dbReference>
<dbReference type="NCBIfam" id="NF010716">
    <property type="entry name" value="PRK14118.1"/>
    <property type="match status" value="1"/>
</dbReference>
<dbReference type="PANTHER" id="PTHR11931">
    <property type="entry name" value="PHOSPHOGLYCERATE MUTASE"/>
    <property type="match status" value="1"/>
</dbReference>
<dbReference type="Pfam" id="PF00300">
    <property type="entry name" value="His_Phos_1"/>
    <property type="match status" value="2"/>
</dbReference>
<dbReference type="PIRSF" id="PIRSF000709">
    <property type="entry name" value="6PFK_2-Ptase"/>
    <property type="match status" value="1"/>
</dbReference>
<dbReference type="SMART" id="SM00855">
    <property type="entry name" value="PGAM"/>
    <property type="match status" value="1"/>
</dbReference>
<dbReference type="SUPFAM" id="SSF53254">
    <property type="entry name" value="Phosphoglycerate mutase-like"/>
    <property type="match status" value="1"/>
</dbReference>
<evidence type="ECO:0000255" key="1">
    <source>
        <dbReference type="HAMAP-Rule" id="MF_01039"/>
    </source>
</evidence>
<comment type="function">
    <text evidence="1">Catalyzes the interconversion of 2-phosphoglycerate and 3-phosphoglycerate.</text>
</comment>
<comment type="catalytic activity">
    <reaction evidence="1">
        <text>(2R)-2-phosphoglycerate = (2R)-3-phosphoglycerate</text>
        <dbReference type="Rhea" id="RHEA:15901"/>
        <dbReference type="ChEBI" id="CHEBI:58272"/>
        <dbReference type="ChEBI" id="CHEBI:58289"/>
        <dbReference type="EC" id="5.4.2.11"/>
    </reaction>
</comment>
<comment type="pathway">
    <text evidence="1">Carbohydrate degradation; glycolysis; pyruvate from D-glyceraldehyde 3-phosphate: step 3/5.</text>
</comment>
<comment type="subunit">
    <text evidence="1">Homodimer.</text>
</comment>
<comment type="similarity">
    <text evidence="1">Belongs to the phosphoglycerate mutase family. BPG-dependent PGAM subfamily.</text>
</comment>
<reference key="1">
    <citation type="journal article" date="2009" name="J. Bacteriol.">
        <title>Complete genome sequence of Haemophilus parasuis SH0165.</title>
        <authorList>
            <person name="Yue M."/>
            <person name="Yang F."/>
            <person name="Yang J."/>
            <person name="Bei W."/>
            <person name="Cai X."/>
            <person name="Chen L."/>
            <person name="Dong J."/>
            <person name="Zhou R."/>
            <person name="Jin M."/>
            <person name="Jin Q."/>
            <person name="Chen H."/>
        </authorList>
    </citation>
    <scope>NUCLEOTIDE SEQUENCE [LARGE SCALE GENOMIC DNA]</scope>
    <source>
        <strain>SH0165</strain>
    </source>
</reference>
<name>GPMA_GLAP5</name>